<feature type="chain" id="PRO_1000119984" description="UPF0145 protein Bmul_3577/BMULJ_04940">
    <location>
        <begin position="1"/>
        <end position="122"/>
    </location>
</feature>
<sequence length="122" mass="12873">MTDAPRSPDALSPDRVTTAFDLPGHTTVRALGVAQGIVVRSRSIVGTFGASLQTLFGGNITLYTSLCEKARQHAFDKMLDDARRLGANAVVAMRYDSTEIGSGVTEVICYGTAVQVAPDAGR</sequence>
<comment type="similarity">
    <text evidence="1">Belongs to the UPF0145 family.</text>
</comment>
<accession>A9AN40</accession>
<evidence type="ECO:0000255" key="1">
    <source>
        <dbReference type="HAMAP-Rule" id="MF_00338"/>
    </source>
</evidence>
<protein>
    <recommendedName>
        <fullName evidence="1">UPF0145 protein Bmul_3577/BMULJ_04940</fullName>
    </recommendedName>
</protein>
<gene>
    <name type="ordered locus">Bmul_3577</name>
    <name type="ordered locus">BMULJ_04940</name>
</gene>
<reference key="1">
    <citation type="submission" date="2007-10" db="EMBL/GenBank/DDBJ databases">
        <title>Complete sequence of chromosome 2 of Burkholderia multivorans ATCC 17616.</title>
        <authorList>
            <person name="Copeland A."/>
            <person name="Lucas S."/>
            <person name="Lapidus A."/>
            <person name="Barry K."/>
            <person name="Glavina del Rio T."/>
            <person name="Dalin E."/>
            <person name="Tice H."/>
            <person name="Pitluck S."/>
            <person name="Chain P."/>
            <person name="Malfatti S."/>
            <person name="Shin M."/>
            <person name="Vergez L."/>
            <person name="Schmutz J."/>
            <person name="Larimer F."/>
            <person name="Land M."/>
            <person name="Hauser L."/>
            <person name="Kyrpides N."/>
            <person name="Kim E."/>
            <person name="Tiedje J."/>
            <person name="Richardson P."/>
        </authorList>
    </citation>
    <scope>NUCLEOTIDE SEQUENCE [LARGE SCALE GENOMIC DNA]</scope>
    <source>
        <strain>ATCC 17616 / 249</strain>
    </source>
</reference>
<reference key="2">
    <citation type="submission" date="2007-04" db="EMBL/GenBank/DDBJ databases">
        <title>Complete genome sequence of Burkholderia multivorans ATCC 17616.</title>
        <authorList>
            <person name="Ohtsubo Y."/>
            <person name="Yamashita A."/>
            <person name="Kurokawa K."/>
            <person name="Takami H."/>
            <person name="Yuhara S."/>
            <person name="Nishiyama E."/>
            <person name="Endo R."/>
            <person name="Miyazaki R."/>
            <person name="Ono A."/>
            <person name="Yano K."/>
            <person name="Ito M."/>
            <person name="Sota M."/>
            <person name="Yuji N."/>
            <person name="Hattori M."/>
            <person name="Tsuda M."/>
        </authorList>
    </citation>
    <scope>NUCLEOTIDE SEQUENCE [LARGE SCALE GENOMIC DNA]</scope>
    <source>
        <strain>ATCC 17616 / 249</strain>
    </source>
</reference>
<proteinExistence type="inferred from homology"/>
<organism>
    <name type="scientific">Burkholderia multivorans (strain ATCC 17616 / 249)</name>
    <dbReference type="NCBI Taxonomy" id="395019"/>
    <lineage>
        <taxon>Bacteria</taxon>
        <taxon>Pseudomonadati</taxon>
        <taxon>Pseudomonadota</taxon>
        <taxon>Betaproteobacteria</taxon>
        <taxon>Burkholderiales</taxon>
        <taxon>Burkholderiaceae</taxon>
        <taxon>Burkholderia</taxon>
        <taxon>Burkholderia cepacia complex</taxon>
    </lineage>
</organism>
<keyword id="KW-1185">Reference proteome</keyword>
<name>Y4940_BURM1</name>
<dbReference type="EMBL" id="CP000869">
    <property type="protein sequence ID" value="ABX17261.1"/>
    <property type="molecule type" value="Genomic_DNA"/>
</dbReference>
<dbReference type="EMBL" id="AP009386">
    <property type="protein sequence ID" value="BAG46786.1"/>
    <property type="molecule type" value="Genomic_DNA"/>
</dbReference>
<dbReference type="RefSeq" id="WP_006396390.1">
    <property type="nucleotide sequence ID" value="NC_010805.1"/>
</dbReference>
<dbReference type="SMR" id="A9AN40"/>
<dbReference type="STRING" id="395019.BMULJ_04940"/>
<dbReference type="KEGG" id="bmj:BMULJ_04940"/>
<dbReference type="KEGG" id="bmu:Bmul_3577"/>
<dbReference type="eggNOG" id="COG0393">
    <property type="taxonomic scope" value="Bacteria"/>
</dbReference>
<dbReference type="HOGENOM" id="CLU_117144_1_1_4"/>
<dbReference type="Proteomes" id="UP000008815">
    <property type="component" value="Chromosome 2"/>
</dbReference>
<dbReference type="Gene3D" id="3.30.110.70">
    <property type="entry name" value="Hypothetical protein apc22750. Chain B"/>
    <property type="match status" value="1"/>
</dbReference>
<dbReference type="HAMAP" id="MF_00338">
    <property type="entry name" value="UPF0145"/>
    <property type="match status" value="1"/>
</dbReference>
<dbReference type="InterPro" id="IPR035439">
    <property type="entry name" value="UPF0145_dom_sf"/>
</dbReference>
<dbReference type="InterPro" id="IPR002765">
    <property type="entry name" value="UPF0145_YbjQ-like"/>
</dbReference>
<dbReference type="PANTHER" id="PTHR34068:SF2">
    <property type="entry name" value="UPF0145 PROTEIN SCO3412"/>
    <property type="match status" value="1"/>
</dbReference>
<dbReference type="PANTHER" id="PTHR34068">
    <property type="entry name" value="UPF0145 PROTEIN YBJQ"/>
    <property type="match status" value="1"/>
</dbReference>
<dbReference type="Pfam" id="PF01906">
    <property type="entry name" value="YbjQ_1"/>
    <property type="match status" value="1"/>
</dbReference>
<dbReference type="SUPFAM" id="SSF117782">
    <property type="entry name" value="YbjQ-like"/>
    <property type="match status" value="1"/>
</dbReference>